<sequence>MKLPIYLDYAATTPVDPRVAEKMMQHMTMDGVFGNPASRSHKYGWQAEEAVDIARNQVADLINADHREIVFTSGATESINLAIKGIAHFYHKKGKHIITSKTEHKAVLDTCRQLEREGYEVTYLEPEANGLIPLARIEDAMRDDTLLVSIMHVNNEIGVIQDVMAIGELCRSKGIIFHMDAAQSAGKLPIDVQQLKVDLISISGHKMYGPKGVGALYVRRKPRIRLESQMHGGGHERGMRSGTLATHQLVGLGEAAAIAKQDMESDNARIRTLRDKLWNGVKHIEETYINGDMEQRFCGSLNVSFNFVEGESLMMALKDLAVSSGSACTSASLEPSYVLRALGLNDEMAHSSIRFSIGRFTTDEDIDHAIKVITQSIDKLREMSPLWEMFKDGIDLDQVQWAHH</sequence>
<comment type="function">
    <text evidence="1">Master enzyme that delivers sulfur to a number of partners involved in Fe-S cluster assembly, tRNA modification or cofactor biosynthesis. Catalyzes the removal of elemental sulfur atoms from cysteine to produce alanine. Functions as a sulfur delivery protein for Fe-S cluster synthesis onto IscU, an Fe-S scaffold assembly protein, as well as other S acceptor proteins.</text>
</comment>
<comment type="catalytic activity">
    <reaction evidence="1">
        <text>(sulfur carrier)-H + L-cysteine = (sulfur carrier)-SH + L-alanine</text>
        <dbReference type="Rhea" id="RHEA:43892"/>
        <dbReference type="Rhea" id="RHEA-COMP:14737"/>
        <dbReference type="Rhea" id="RHEA-COMP:14739"/>
        <dbReference type="ChEBI" id="CHEBI:29917"/>
        <dbReference type="ChEBI" id="CHEBI:35235"/>
        <dbReference type="ChEBI" id="CHEBI:57972"/>
        <dbReference type="ChEBI" id="CHEBI:64428"/>
        <dbReference type="EC" id="2.8.1.7"/>
    </reaction>
</comment>
<comment type="cofactor">
    <cofactor evidence="1">
        <name>pyridoxal 5'-phosphate</name>
        <dbReference type="ChEBI" id="CHEBI:597326"/>
    </cofactor>
</comment>
<comment type="pathway">
    <text evidence="1">Cofactor biosynthesis; iron-sulfur cluster biosynthesis.</text>
</comment>
<comment type="subunit">
    <text evidence="1">Homodimer. Forms a heterotetramer with IscU, interacts with other sulfur acceptors.</text>
</comment>
<comment type="subcellular location">
    <subcellularLocation>
        <location evidence="1">Cytoplasm</location>
    </subcellularLocation>
</comment>
<comment type="similarity">
    <text evidence="1">Belongs to the class-V pyridoxal-phosphate-dependent aminotransferase family. NifS/IscS subfamily.</text>
</comment>
<protein>
    <recommendedName>
        <fullName evidence="1">Cysteine desulfurase IscS</fullName>
        <ecNumber evidence="1">2.8.1.7</ecNumber>
    </recommendedName>
</protein>
<feature type="chain" id="PRO_1000019443" description="Cysteine desulfurase IscS">
    <location>
        <begin position="1"/>
        <end position="404"/>
    </location>
</feature>
<feature type="active site" description="Cysteine persulfide intermediate" evidence="1">
    <location>
        <position position="328"/>
    </location>
</feature>
<feature type="binding site" evidence="1">
    <location>
        <begin position="75"/>
        <end position="76"/>
    </location>
    <ligand>
        <name>pyridoxal 5'-phosphate</name>
        <dbReference type="ChEBI" id="CHEBI:597326"/>
    </ligand>
</feature>
<feature type="binding site" evidence="1">
    <location>
        <position position="155"/>
    </location>
    <ligand>
        <name>pyridoxal 5'-phosphate</name>
        <dbReference type="ChEBI" id="CHEBI:597326"/>
    </ligand>
</feature>
<feature type="binding site" evidence="1">
    <location>
        <position position="183"/>
    </location>
    <ligand>
        <name>pyridoxal 5'-phosphate</name>
        <dbReference type="ChEBI" id="CHEBI:597326"/>
    </ligand>
</feature>
<feature type="binding site" evidence="1">
    <location>
        <begin position="203"/>
        <end position="205"/>
    </location>
    <ligand>
        <name>pyridoxal 5'-phosphate</name>
        <dbReference type="ChEBI" id="CHEBI:597326"/>
    </ligand>
</feature>
<feature type="binding site" evidence="1">
    <location>
        <position position="243"/>
    </location>
    <ligand>
        <name>pyridoxal 5'-phosphate</name>
        <dbReference type="ChEBI" id="CHEBI:597326"/>
    </ligand>
</feature>
<feature type="binding site" description="via persulfide group" evidence="1">
    <location>
        <position position="328"/>
    </location>
    <ligand>
        <name>[2Fe-2S] cluster</name>
        <dbReference type="ChEBI" id="CHEBI:190135"/>
        <note>ligand shared with IscU</note>
    </ligand>
</feature>
<feature type="modified residue" description="N6-(pyridoxal phosphate)lysine" evidence="1">
    <location>
        <position position="206"/>
    </location>
</feature>
<reference key="1">
    <citation type="submission" date="2006-03" db="EMBL/GenBank/DDBJ databases">
        <title>Complete sequence of Shewanella denitrificans OS217.</title>
        <authorList>
            <consortium name="US DOE Joint Genome Institute"/>
            <person name="Copeland A."/>
            <person name="Lucas S."/>
            <person name="Lapidus A."/>
            <person name="Barry K."/>
            <person name="Detter J.C."/>
            <person name="Glavina del Rio T."/>
            <person name="Hammon N."/>
            <person name="Israni S."/>
            <person name="Dalin E."/>
            <person name="Tice H."/>
            <person name="Pitluck S."/>
            <person name="Brettin T."/>
            <person name="Bruce D."/>
            <person name="Han C."/>
            <person name="Tapia R."/>
            <person name="Gilna P."/>
            <person name="Kiss H."/>
            <person name="Schmutz J."/>
            <person name="Larimer F."/>
            <person name="Land M."/>
            <person name="Hauser L."/>
            <person name="Kyrpides N."/>
            <person name="Lykidis A."/>
            <person name="Richardson P."/>
        </authorList>
    </citation>
    <scope>NUCLEOTIDE SEQUENCE [LARGE SCALE GENOMIC DNA]</scope>
    <source>
        <strain>OS217 / ATCC BAA-1090 / DSM 15013</strain>
    </source>
</reference>
<keyword id="KW-0001">2Fe-2S</keyword>
<keyword id="KW-0963">Cytoplasm</keyword>
<keyword id="KW-0408">Iron</keyword>
<keyword id="KW-0411">Iron-sulfur</keyword>
<keyword id="KW-0479">Metal-binding</keyword>
<keyword id="KW-0663">Pyridoxal phosphate</keyword>
<keyword id="KW-1185">Reference proteome</keyword>
<keyword id="KW-0808">Transferase</keyword>
<organism>
    <name type="scientific">Shewanella denitrificans (strain OS217 / ATCC BAA-1090 / DSM 15013)</name>
    <dbReference type="NCBI Taxonomy" id="318161"/>
    <lineage>
        <taxon>Bacteria</taxon>
        <taxon>Pseudomonadati</taxon>
        <taxon>Pseudomonadota</taxon>
        <taxon>Gammaproteobacteria</taxon>
        <taxon>Alteromonadales</taxon>
        <taxon>Shewanellaceae</taxon>
        <taxon>Shewanella</taxon>
    </lineage>
</organism>
<dbReference type="EC" id="2.8.1.7" evidence="1"/>
<dbReference type="EMBL" id="CP000302">
    <property type="protein sequence ID" value="ABE54743.1"/>
    <property type="molecule type" value="Genomic_DNA"/>
</dbReference>
<dbReference type="RefSeq" id="WP_011495901.1">
    <property type="nucleotide sequence ID" value="NC_007954.1"/>
</dbReference>
<dbReference type="SMR" id="Q12P83"/>
<dbReference type="STRING" id="318161.Sden_1458"/>
<dbReference type="KEGG" id="sdn:Sden_1458"/>
<dbReference type="eggNOG" id="COG1104">
    <property type="taxonomic scope" value="Bacteria"/>
</dbReference>
<dbReference type="HOGENOM" id="CLU_003433_0_2_6"/>
<dbReference type="OrthoDB" id="9808002at2"/>
<dbReference type="UniPathway" id="UPA00266"/>
<dbReference type="Proteomes" id="UP000001982">
    <property type="component" value="Chromosome"/>
</dbReference>
<dbReference type="GO" id="GO:1990221">
    <property type="term" value="C:L-cysteine desulfurase complex"/>
    <property type="evidence" value="ECO:0007669"/>
    <property type="project" value="UniProtKB-ARBA"/>
</dbReference>
<dbReference type="GO" id="GO:0051537">
    <property type="term" value="F:2 iron, 2 sulfur cluster binding"/>
    <property type="evidence" value="ECO:0007669"/>
    <property type="project" value="UniProtKB-UniRule"/>
</dbReference>
<dbReference type="GO" id="GO:0031071">
    <property type="term" value="F:cysteine desulfurase activity"/>
    <property type="evidence" value="ECO:0007669"/>
    <property type="project" value="UniProtKB-UniRule"/>
</dbReference>
<dbReference type="GO" id="GO:0046872">
    <property type="term" value="F:metal ion binding"/>
    <property type="evidence" value="ECO:0007669"/>
    <property type="project" value="UniProtKB-KW"/>
</dbReference>
<dbReference type="GO" id="GO:0030170">
    <property type="term" value="F:pyridoxal phosphate binding"/>
    <property type="evidence" value="ECO:0007669"/>
    <property type="project" value="UniProtKB-UniRule"/>
</dbReference>
<dbReference type="GO" id="GO:0044571">
    <property type="term" value="P:[2Fe-2S] cluster assembly"/>
    <property type="evidence" value="ECO:0007669"/>
    <property type="project" value="UniProtKB-UniRule"/>
</dbReference>
<dbReference type="FunFam" id="3.40.640.10:FF:000003">
    <property type="entry name" value="Cysteine desulfurase IscS"/>
    <property type="match status" value="1"/>
</dbReference>
<dbReference type="FunFam" id="3.90.1150.10:FF:000002">
    <property type="entry name" value="Cysteine desulfurase IscS"/>
    <property type="match status" value="1"/>
</dbReference>
<dbReference type="Gene3D" id="3.90.1150.10">
    <property type="entry name" value="Aspartate Aminotransferase, domain 1"/>
    <property type="match status" value="1"/>
</dbReference>
<dbReference type="Gene3D" id="3.40.640.10">
    <property type="entry name" value="Type I PLP-dependent aspartate aminotransferase-like (Major domain)"/>
    <property type="match status" value="1"/>
</dbReference>
<dbReference type="HAMAP" id="MF_00331">
    <property type="entry name" value="Cys_desulf_IscS"/>
    <property type="match status" value="1"/>
</dbReference>
<dbReference type="InterPro" id="IPR000192">
    <property type="entry name" value="Aminotrans_V_dom"/>
</dbReference>
<dbReference type="InterPro" id="IPR020578">
    <property type="entry name" value="Aminotrans_V_PyrdxlP_BS"/>
</dbReference>
<dbReference type="InterPro" id="IPR010240">
    <property type="entry name" value="Cys_deSase_IscS"/>
</dbReference>
<dbReference type="InterPro" id="IPR016454">
    <property type="entry name" value="Cysteine_dSase"/>
</dbReference>
<dbReference type="InterPro" id="IPR015424">
    <property type="entry name" value="PyrdxlP-dep_Trfase"/>
</dbReference>
<dbReference type="InterPro" id="IPR015421">
    <property type="entry name" value="PyrdxlP-dep_Trfase_major"/>
</dbReference>
<dbReference type="InterPro" id="IPR015422">
    <property type="entry name" value="PyrdxlP-dep_Trfase_small"/>
</dbReference>
<dbReference type="NCBIfam" id="TIGR02006">
    <property type="entry name" value="IscS"/>
    <property type="match status" value="1"/>
</dbReference>
<dbReference type="NCBIfam" id="NF002806">
    <property type="entry name" value="PRK02948.1"/>
    <property type="match status" value="1"/>
</dbReference>
<dbReference type="NCBIfam" id="NF010611">
    <property type="entry name" value="PRK14012.1"/>
    <property type="match status" value="1"/>
</dbReference>
<dbReference type="PANTHER" id="PTHR11601:SF34">
    <property type="entry name" value="CYSTEINE DESULFURASE"/>
    <property type="match status" value="1"/>
</dbReference>
<dbReference type="PANTHER" id="PTHR11601">
    <property type="entry name" value="CYSTEINE DESULFURYLASE FAMILY MEMBER"/>
    <property type="match status" value="1"/>
</dbReference>
<dbReference type="Pfam" id="PF00266">
    <property type="entry name" value="Aminotran_5"/>
    <property type="match status" value="1"/>
</dbReference>
<dbReference type="PIRSF" id="PIRSF005572">
    <property type="entry name" value="NifS"/>
    <property type="match status" value="1"/>
</dbReference>
<dbReference type="SUPFAM" id="SSF53383">
    <property type="entry name" value="PLP-dependent transferases"/>
    <property type="match status" value="1"/>
</dbReference>
<dbReference type="PROSITE" id="PS00595">
    <property type="entry name" value="AA_TRANSFER_CLASS_5"/>
    <property type="match status" value="1"/>
</dbReference>
<accession>Q12P83</accession>
<gene>
    <name evidence="1" type="primary">iscS</name>
    <name type="ordered locus">Sden_1458</name>
</gene>
<proteinExistence type="inferred from homology"/>
<evidence type="ECO:0000255" key="1">
    <source>
        <dbReference type="HAMAP-Rule" id="MF_00331"/>
    </source>
</evidence>
<name>ISCS_SHEDO</name>